<evidence type="ECO:0000255" key="1"/>
<evidence type="ECO:0000256" key="2">
    <source>
        <dbReference type="SAM" id="MobiDB-lite"/>
    </source>
</evidence>
<evidence type="ECO:0000305" key="3"/>
<evidence type="ECO:0000312" key="4">
    <source>
        <dbReference type="MGI" id="MGI:5434953"/>
    </source>
</evidence>
<proteinExistence type="inferred from homology"/>
<dbReference type="EMBL" id="AL844494">
    <property type="status" value="NOT_ANNOTATED_CDS"/>
    <property type="molecule type" value="Genomic_DNA"/>
</dbReference>
<dbReference type="RefSeq" id="XP_003688841.1">
    <property type="nucleotide sequence ID" value="XM_003688793.5"/>
</dbReference>
<dbReference type="RefSeq" id="XP_003689294.1">
    <property type="nucleotide sequence ID" value="XM_003689246.4"/>
</dbReference>
<dbReference type="Ensembl" id="ENSMUST00000108026.3">
    <property type="protein sequence ID" value="ENSMUSP00000103661.3"/>
    <property type="gene ID" value="ENSMUSG00000078746.3"/>
</dbReference>
<dbReference type="Ensembl" id="ENSMUST00000178192.3">
    <property type="protein sequence ID" value="ENSMUSP00000137159.2"/>
    <property type="gene ID" value="ENSMUSG00000093996.3"/>
</dbReference>
<dbReference type="Ensembl" id="ENSMUST00000180201.2">
    <property type="protein sequence ID" value="ENSMUSP00000136864.2"/>
    <property type="gene ID" value="ENSMUSG00000094066.2"/>
</dbReference>
<dbReference type="GeneID" id="100862261"/>
<dbReference type="KEGG" id="mmu:545611"/>
<dbReference type="AGR" id="MGI:5434953"/>
<dbReference type="CTD" id="100043920"/>
<dbReference type="CTD" id="100862261"/>
<dbReference type="CTD" id="545611"/>
<dbReference type="MGI" id="MGI:5434953">
    <property type="gene designation" value="Spata31f1c"/>
</dbReference>
<dbReference type="VEuPathDB" id="HostDB:ENSMUSG00000078746"/>
<dbReference type="VEuPathDB" id="HostDB:ENSMUSG00000079774"/>
<dbReference type="VEuPathDB" id="HostDB:ENSMUSG00000093996"/>
<dbReference type="VEuPathDB" id="HostDB:ENSMUSG00000094066"/>
<dbReference type="InParanoid" id="C0HKD2"/>
<dbReference type="OMA" id="CRCHQKV"/>
<dbReference type="OrthoDB" id="73989at9989"/>
<dbReference type="PRO" id="PR:C0HKD2"/>
<dbReference type="Proteomes" id="UP000000589">
    <property type="component" value="Chromosome 4"/>
</dbReference>
<dbReference type="Bgee" id="ENSMUSG00000078746">
    <property type="expression patterns" value="Expressed in spermatid and 14 other cell types or tissues"/>
</dbReference>
<dbReference type="GO" id="GO:0016020">
    <property type="term" value="C:membrane"/>
    <property type="evidence" value="ECO:0007669"/>
    <property type="project" value="UniProtKB-SubCell"/>
</dbReference>
<dbReference type="InterPro" id="IPR039509">
    <property type="entry name" value="SPATA31"/>
</dbReference>
<dbReference type="InterPro" id="IPR027970">
    <property type="entry name" value="SPATA31F3-like"/>
</dbReference>
<dbReference type="PANTHER" id="PTHR21859">
    <property type="entry name" value="ACROSOME-SPECIFIC PROTEIN"/>
    <property type="match status" value="1"/>
</dbReference>
<dbReference type="PANTHER" id="PTHR21859:SF62">
    <property type="entry name" value="FAMILY WITH SEQUENCE SIMILARITY 205, MEMBER A1-RELATED"/>
    <property type="match status" value="1"/>
</dbReference>
<dbReference type="Pfam" id="PF15371">
    <property type="entry name" value="DUF4599"/>
    <property type="match status" value="1"/>
</dbReference>
<dbReference type="Pfam" id="PF14650">
    <property type="entry name" value="FAM75"/>
    <property type="match status" value="2"/>
</dbReference>
<sequence>MLSTMCFLWDTECPLYVYFCFFIIVLIVWQVRQNYQGLKCENRRSCCRRHQKVRQRAKDAASRARRLSREEDEKPCELLSIMKSQSWVPKQGNVRQLLCLDPSCQICEATTLEIRQLLQSKKSQISPALLGLPQRAACLEMPISSESFEWNQDFYSRYSTNSPVVPGNQTLTQLTEELTESTNADGVLLCWTDPLQIGQEFHLADMPMASETLVSPGLEEPVVLMNEEDTVHSNLNYIQQLQDHEALNSQIPFQTLTPQLTVTHPMAVSIVTDAPQPFLSPEVLRLLEIHVKKLMHFQRWGLPRRVEESLKQFMPNPPVYLPPEHNQPVSFILNTSSQDCVHRFEGISPETWYSYMDGQPIQTFWVSEWSSGDQGQRLSCKPIPSPVEKPLLTPDYELLHDLCLSPEGQVDGSQSNLQKKFTQLFCGLPSMHSESLGSTFLCTQGVSKNTLKPPYKEPHFLKVSPPIPLPEAAPPPSSTSPNESLDEPQRAQIGGVPFLTLSECKTLEWHLLQRQLQLQWGLPAVIARPPRVQSHTQYKHKPWNKAKPRETLKFFGPGKPFSALTRELFFIPQHARRLLEFHLQKRLIHLRWGLPQRIQRSINMLLSSTDLQSLPCGGSRLPNVSISQPGKPEAYGSGDTFLPTAGKGTTPMPHLFAKAQEMLKSHDTKCEQIREGKVPACVQSAWKGRIPGDLAAGTLFPNIPQGQPLELQAENNPDLHQEAVSWKPMDLDQEAQAFSGVFIEHCRRPQALSEETIKKLETTLRHKYLAFLSGLQALYCMAPTKATSPTVDQSVITTMPWSVKSPQKPLSQKSPLEALCLSGLEPCTQDDKETSANIAEEFQHGAQGHGRTEKVPPERQPLLNRPYSLDTEIMERVSFYLKRKALDIKLGISLKESVFQEPTATDLESESVQEPLGSPRESTLLQGPPTLCHVPVAPDPDKVCLKQPATAVQVVFQEQNQPSSRAVPHRSARQGSQVHRNMMEAQVHYVQMGTGGEMLNLGEPFSTESQSPGKSKSGYVPTVAGKRKIPGKPKVVGDLGEGDAGLGFSLVSLKTRQDGEQEKRLLHRQLQGSSLQAQTFHLEGACPHSPQESPELQFADPPPEVFMETDSEQDMEDSQSKESIVPEPARTAKAPQPMLSRASQGLPFPRSPTQRKPSQGQPGPGHVPPGHATPASPYTRPSRLPEAGLKNKMKLFFHSIKLKMKSKAHTEPSTVSTPGKVAKTSKENIDRGLPQAKSPTKKTKPEDFRGPKAQFSVVGPCLTPSYILDSKFWPRPRRVGSVSVLGHSYHCPRHCPRLAYANQQRNPP</sequence>
<feature type="chain" id="PRO_0000444751" description="Spermatogenesis-associated protein 31F1C">
    <location>
        <begin position="1"/>
        <end position="1308"/>
    </location>
</feature>
<feature type="transmembrane region" description="Helical" evidence="1">
    <location>
        <begin position="7"/>
        <end position="27"/>
    </location>
</feature>
<feature type="region of interest" description="Disordered" evidence="2">
    <location>
        <begin position="464"/>
        <end position="488"/>
    </location>
</feature>
<feature type="region of interest" description="Disordered" evidence="2">
    <location>
        <begin position="627"/>
        <end position="648"/>
    </location>
</feature>
<feature type="region of interest" description="Disordered" evidence="2">
    <location>
        <begin position="844"/>
        <end position="863"/>
    </location>
</feature>
<feature type="region of interest" description="Disordered" evidence="2">
    <location>
        <begin position="902"/>
        <end position="927"/>
    </location>
</feature>
<feature type="region of interest" description="Disordered" evidence="2">
    <location>
        <begin position="1005"/>
        <end position="1026"/>
    </location>
</feature>
<feature type="region of interest" description="Disordered" evidence="2">
    <location>
        <begin position="1084"/>
        <end position="1190"/>
    </location>
</feature>
<feature type="region of interest" description="Disordered" evidence="2">
    <location>
        <begin position="1204"/>
        <end position="1254"/>
    </location>
</feature>
<feature type="compositionally biased region" description="Pro residues" evidence="2">
    <location>
        <begin position="465"/>
        <end position="478"/>
    </location>
</feature>
<feature type="compositionally biased region" description="Acidic residues" evidence="2">
    <location>
        <begin position="1107"/>
        <end position="1117"/>
    </location>
</feature>
<reference key="1">
    <citation type="journal article" date="2009" name="PLoS Biol.">
        <title>Lineage-specific biology revealed by a finished genome assembly of the mouse.</title>
        <authorList>
            <person name="Church D.M."/>
            <person name="Goodstadt L."/>
            <person name="Hillier L.W."/>
            <person name="Zody M.C."/>
            <person name="Goldstein S."/>
            <person name="She X."/>
            <person name="Bult C.J."/>
            <person name="Agarwala R."/>
            <person name="Cherry J.L."/>
            <person name="DiCuccio M."/>
            <person name="Hlavina W."/>
            <person name="Kapustin Y."/>
            <person name="Meric P."/>
            <person name="Maglott D."/>
            <person name="Birtle Z."/>
            <person name="Marques A.C."/>
            <person name="Graves T."/>
            <person name="Zhou S."/>
            <person name="Teague B."/>
            <person name="Potamousis K."/>
            <person name="Churas C."/>
            <person name="Place M."/>
            <person name="Herschleb J."/>
            <person name="Runnheim R."/>
            <person name="Forrest D."/>
            <person name="Amos-Landgraf J."/>
            <person name="Schwartz D.C."/>
            <person name="Cheng Z."/>
            <person name="Lindblad-Toh K."/>
            <person name="Eichler E.E."/>
            <person name="Ponting C.P."/>
        </authorList>
    </citation>
    <scope>NUCLEOTIDE SEQUENCE [LARGE SCALE GENOMIC DNA]</scope>
    <source>
        <strain>C57BL/6J</strain>
    </source>
</reference>
<accession>C0HKD2</accession>
<accession>A2APU8</accession>
<comment type="subcellular location">
    <subcellularLocation>
        <location evidence="1">Membrane</location>
        <topology evidence="1">Single-pass membrane protein</topology>
    </subcellularLocation>
</comment>
<comment type="similarity">
    <text evidence="3">Belongs to the SPATA31 family.</text>
</comment>
<protein>
    <recommendedName>
        <fullName evidence="3">Spermatogenesis-associated protein 31F1C</fullName>
    </recommendedName>
    <alternativeName>
        <fullName evidence="4">Protein FAM205A-3</fullName>
    </alternativeName>
    <alternativeName>
        <fullName evidence="3">Protein SPATA31F1-3</fullName>
    </alternativeName>
</protein>
<keyword id="KW-0472">Membrane</keyword>
<keyword id="KW-1185">Reference proteome</keyword>
<keyword id="KW-0812">Transmembrane</keyword>
<keyword id="KW-1133">Transmembrane helix</keyword>
<gene>
    <name evidence="4" type="primary">Spata31f1c</name>
    <name evidence="4" type="synonym">Fam205a3</name>
    <name evidence="3" type="synonym">Spata31f1-3</name>
</gene>
<organism>
    <name type="scientific">Mus musculus</name>
    <name type="common">Mouse</name>
    <dbReference type="NCBI Taxonomy" id="10090"/>
    <lineage>
        <taxon>Eukaryota</taxon>
        <taxon>Metazoa</taxon>
        <taxon>Chordata</taxon>
        <taxon>Craniata</taxon>
        <taxon>Vertebrata</taxon>
        <taxon>Euteleostomi</taxon>
        <taxon>Mammalia</taxon>
        <taxon>Eutheria</taxon>
        <taxon>Euarchontoglires</taxon>
        <taxon>Glires</taxon>
        <taxon>Rodentia</taxon>
        <taxon>Myomorpha</taxon>
        <taxon>Muroidea</taxon>
        <taxon>Muridae</taxon>
        <taxon>Murinae</taxon>
        <taxon>Mus</taxon>
        <taxon>Mus</taxon>
    </lineage>
</organism>
<name>31F13_MOUSE</name>